<accession>O28815</accession>
<evidence type="ECO:0000255" key="1"/>
<evidence type="ECO:0000305" key="2"/>
<gene>
    <name type="ordered locus">AF_1457</name>
</gene>
<comment type="subcellular location">
    <subcellularLocation>
        <location evidence="2">Cell membrane</location>
        <topology evidence="2">Multi-pass membrane protein</topology>
    </subcellularLocation>
</comment>
<reference key="1">
    <citation type="journal article" date="1997" name="Nature">
        <title>The complete genome sequence of the hyperthermophilic, sulphate-reducing archaeon Archaeoglobus fulgidus.</title>
        <authorList>
            <person name="Klenk H.-P."/>
            <person name="Clayton R.A."/>
            <person name="Tomb J.-F."/>
            <person name="White O."/>
            <person name="Nelson K.E."/>
            <person name="Ketchum K.A."/>
            <person name="Dodson R.J."/>
            <person name="Gwinn M.L."/>
            <person name="Hickey E.K."/>
            <person name="Peterson J.D."/>
            <person name="Richardson D.L."/>
            <person name="Kerlavage A.R."/>
            <person name="Graham D.E."/>
            <person name="Kyrpides N.C."/>
            <person name="Fleischmann R.D."/>
            <person name="Quackenbush J."/>
            <person name="Lee N.H."/>
            <person name="Sutton G.G."/>
            <person name="Gill S.R."/>
            <person name="Kirkness E.F."/>
            <person name="Dougherty B.A."/>
            <person name="McKenney K."/>
            <person name="Adams M.D."/>
            <person name="Loftus B.J."/>
            <person name="Peterson S.N."/>
            <person name="Reich C.I."/>
            <person name="McNeil L.K."/>
            <person name="Badger J.H."/>
            <person name="Glodek A."/>
            <person name="Zhou L."/>
            <person name="Overbeek R."/>
            <person name="Gocayne J.D."/>
            <person name="Weidman J.F."/>
            <person name="McDonald L.A."/>
            <person name="Utterback T.R."/>
            <person name="Cotton M.D."/>
            <person name="Spriggs T."/>
            <person name="Artiach P."/>
            <person name="Kaine B.P."/>
            <person name="Sykes S.M."/>
            <person name="Sadow P.W."/>
            <person name="D'Andrea K.P."/>
            <person name="Bowman C."/>
            <person name="Fujii C."/>
            <person name="Garland S.A."/>
            <person name="Mason T.M."/>
            <person name="Olsen G.J."/>
            <person name="Fraser C.M."/>
            <person name="Smith H.O."/>
            <person name="Woese C.R."/>
            <person name="Venter J.C."/>
        </authorList>
    </citation>
    <scope>NUCLEOTIDE SEQUENCE [LARGE SCALE GENOMIC DNA]</scope>
    <source>
        <strain>ATCC 49558 / DSM 4304 / JCM 9628 / NBRC 100126 / VC-16</strain>
    </source>
</reference>
<feature type="chain" id="PRO_0000128004" description="Uncharacterized protein AF_1457">
    <location>
        <begin position="1"/>
        <end position="105"/>
    </location>
</feature>
<feature type="transmembrane region" description="Helical" evidence="1">
    <location>
        <begin position="7"/>
        <end position="26"/>
    </location>
</feature>
<feature type="transmembrane region" description="Helical" evidence="1">
    <location>
        <begin position="30"/>
        <end position="52"/>
    </location>
</feature>
<dbReference type="EMBL" id="AE000782">
    <property type="protein sequence ID" value="AAB89792.1"/>
    <property type="molecule type" value="Genomic_DNA"/>
</dbReference>
<dbReference type="PIR" id="H69431">
    <property type="entry name" value="H69431"/>
</dbReference>
<dbReference type="RefSeq" id="WP_010878954.1">
    <property type="nucleotide sequence ID" value="NC_000917.1"/>
</dbReference>
<dbReference type="SMR" id="O28815"/>
<dbReference type="STRING" id="224325.AF_1457"/>
<dbReference type="PaxDb" id="224325-AF_1457"/>
<dbReference type="EnsemblBacteria" id="AAB89792">
    <property type="protein sequence ID" value="AAB89792"/>
    <property type="gene ID" value="AF_1457"/>
</dbReference>
<dbReference type="KEGG" id="afu:AF_1457"/>
<dbReference type="eggNOG" id="arCOG04995">
    <property type="taxonomic scope" value="Archaea"/>
</dbReference>
<dbReference type="HOGENOM" id="CLU_174501_0_0_2"/>
<dbReference type="OrthoDB" id="135023at2157"/>
<dbReference type="Proteomes" id="UP000002199">
    <property type="component" value="Chromosome"/>
</dbReference>
<dbReference type="GO" id="GO:0005886">
    <property type="term" value="C:plasma membrane"/>
    <property type="evidence" value="ECO:0007669"/>
    <property type="project" value="UniProtKB-SubCell"/>
</dbReference>
<protein>
    <recommendedName>
        <fullName>Uncharacterized protein AF_1457</fullName>
    </recommendedName>
</protein>
<name>Y1457_ARCFU</name>
<keyword id="KW-1003">Cell membrane</keyword>
<keyword id="KW-0472">Membrane</keyword>
<keyword id="KW-1185">Reference proteome</keyword>
<keyword id="KW-0812">Transmembrane</keyword>
<keyword id="KW-1133">Transmembrane helix</keyword>
<proteinExistence type="predicted"/>
<sequence length="105" mass="12361">MDARDIVLSVISVFSAAALVYRWLSLYDRVDMTVIFFATLLIASLTLLLISIELRMQRIMDEFKSVKRTIAVNSDDLEGRIERLFIEKVRDLEDKLESIERRMYR</sequence>
<organism>
    <name type="scientific">Archaeoglobus fulgidus (strain ATCC 49558 / DSM 4304 / JCM 9628 / NBRC 100126 / VC-16)</name>
    <dbReference type="NCBI Taxonomy" id="224325"/>
    <lineage>
        <taxon>Archaea</taxon>
        <taxon>Methanobacteriati</taxon>
        <taxon>Methanobacteriota</taxon>
        <taxon>Archaeoglobi</taxon>
        <taxon>Archaeoglobales</taxon>
        <taxon>Archaeoglobaceae</taxon>
        <taxon>Archaeoglobus</taxon>
    </lineage>
</organism>